<accession>Q6CA79</accession>
<dbReference type="EC" id="3.4.11.18" evidence="1"/>
<dbReference type="EMBL" id="CR382130">
    <property type="protein sequence ID" value="CAG80621.1"/>
    <property type="molecule type" value="Genomic_DNA"/>
</dbReference>
<dbReference type="RefSeq" id="XP_502433.1">
    <property type="nucleotide sequence ID" value="XM_502433.1"/>
</dbReference>
<dbReference type="SMR" id="Q6CA79"/>
<dbReference type="FunCoup" id="Q6CA79">
    <property type="interactions" value="1207"/>
</dbReference>
<dbReference type="STRING" id="284591.Q6CA79"/>
<dbReference type="MEROPS" id="M24.002"/>
<dbReference type="EnsemblFungi" id="CAG80621">
    <property type="protein sequence ID" value="CAG80621"/>
    <property type="gene ID" value="YALI0_D05159g"/>
</dbReference>
<dbReference type="KEGG" id="yli:2910974"/>
<dbReference type="VEuPathDB" id="FungiDB:YALI0_D05159g"/>
<dbReference type="HOGENOM" id="CLU_015857_7_1_1"/>
<dbReference type="InParanoid" id="Q6CA79"/>
<dbReference type="OMA" id="PFAKRWL"/>
<dbReference type="OrthoDB" id="35851at4891"/>
<dbReference type="Proteomes" id="UP000001300">
    <property type="component" value="Chromosome D"/>
</dbReference>
<dbReference type="GO" id="GO:0005737">
    <property type="term" value="C:cytoplasm"/>
    <property type="evidence" value="ECO:0000318"/>
    <property type="project" value="GO_Central"/>
</dbReference>
<dbReference type="GO" id="GO:0004177">
    <property type="term" value="F:aminopeptidase activity"/>
    <property type="evidence" value="ECO:0000318"/>
    <property type="project" value="GO_Central"/>
</dbReference>
<dbReference type="GO" id="GO:0004239">
    <property type="term" value="F:initiator methionyl aminopeptidase activity"/>
    <property type="evidence" value="ECO:0007669"/>
    <property type="project" value="UniProtKB-UniRule"/>
</dbReference>
<dbReference type="GO" id="GO:0046872">
    <property type="term" value="F:metal ion binding"/>
    <property type="evidence" value="ECO:0007669"/>
    <property type="project" value="UniProtKB-UniRule"/>
</dbReference>
<dbReference type="GO" id="GO:0070006">
    <property type="term" value="F:metalloaminopeptidase activity"/>
    <property type="evidence" value="ECO:0007669"/>
    <property type="project" value="UniProtKB-UniRule"/>
</dbReference>
<dbReference type="GO" id="GO:0008235">
    <property type="term" value="F:metalloexopeptidase activity"/>
    <property type="evidence" value="ECO:0000318"/>
    <property type="project" value="GO_Central"/>
</dbReference>
<dbReference type="GO" id="GO:0051604">
    <property type="term" value="P:protein maturation"/>
    <property type="evidence" value="ECO:0007669"/>
    <property type="project" value="EnsemblFungi"/>
</dbReference>
<dbReference type="GO" id="GO:0006508">
    <property type="term" value="P:proteolysis"/>
    <property type="evidence" value="ECO:0007669"/>
    <property type="project" value="UniProtKB-KW"/>
</dbReference>
<dbReference type="CDD" id="cd01088">
    <property type="entry name" value="MetAP2"/>
    <property type="match status" value="1"/>
</dbReference>
<dbReference type="Gene3D" id="3.90.230.10">
    <property type="entry name" value="Creatinase/methionine aminopeptidase superfamily"/>
    <property type="match status" value="1"/>
</dbReference>
<dbReference type="Gene3D" id="1.10.10.10">
    <property type="entry name" value="Winged helix-like DNA-binding domain superfamily/Winged helix DNA-binding domain"/>
    <property type="match status" value="1"/>
</dbReference>
<dbReference type="HAMAP" id="MF_03175">
    <property type="entry name" value="MetAP_2_euk"/>
    <property type="match status" value="1"/>
</dbReference>
<dbReference type="InterPro" id="IPR036005">
    <property type="entry name" value="Creatinase/aminopeptidase-like"/>
</dbReference>
<dbReference type="InterPro" id="IPR050247">
    <property type="entry name" value="Met_Aminopeptidase_Type2"/>
</dbReference>
<dbReference type="InterPro" id="IPR000994">
    <property type="entry name" value="Pept_M24"/>
</dbReference>
<dbReference type="InterPro" id="IPR001714">
    <property type="entry name" value="Pept_M24_MAP"/>
</dbReference>
<dbReference type="InterPro" id="IPR002468">
    <property type="entry name" value="Pept_M24A_MAP2"/>
</dbReference>
<dbReference type="InterPro" id="IPR018349">
    <property type="entry name" value="Pept_M24A_MAP2_BS"/>
</dbReference>
<dbReference type="InterPro" id="IPR036388">
    <property type="entry name" value="WH-like_DNA-bd_sf"/>
</dbReference>
<dbReference type="InterPro" id="IPR036390">
    <property type="entry name" value="WH_DNA-bd_sf"/>
</dbReference>
<dbReference type="NCBIfam" id="TIGR00501">
    <property type="entry name" value="met_pdase_II"/>
    <property type="match status" value="1"/>
</dbReference>
<dbReference type="PANTHER" id="PTHR45777">
    <property type="entry name" value="METHIONINE AMINOPEPTIDASE 2"/>
    <property type="match status" value="1"/>
</dbReference>
<dbReference type="PANTHER" id="PTHR45777:SF2">
    <property type="entry name" value="METHIONINE AMINOPEPTIDASE 2"/>
    <property type="match status" value="1"/>
</dbReference>
<dbReference type="Pfam" id="PF00557">
    <property type="entry name" value="Peptidase_M24"/>
    <property type="match status" value="1"/>
</dbReference>
<dbReference type="PRINTS" id="PR00599">
    <property type="entry name" value="MAPEPTIDASE"/>
</dbReference>
<dbReference type="SUPFAM" id="SSF55920">
    <property type="entry name" value="Creatinase/aminopeptidase"/>
    <property type="match status" value="1"/>
</dbReference>
<dbReference type="SUPFAM" id="SSF46785">
    <property type="entry name" value="Winged helix' DNA-binding domain"/>
    <property type="match status" value="1"/>
</dbReference>
<dbReference type="PROSITE" id="PS01202">
    <property type="entry name" value="MAP_2"/>
    <property type="match status" value="1"/>
</dbReference>
<protein>
    <recommendedName>
        <fullName evidence="1">Methionine aminopeptidase 2</fullName>
        <shortName evidence="1">MAP 2</shortName>
        <shortName evidence="1">MetAP 2</shortName>
        <ecNumber evidence="1">3.4.11.18</ecNumber>
    </recommendedName>
    <alternativeName>
        <fullName evidence="1">Peptidase M</fullName>
    </alternativeName>
</protein>
<keyword id="KW-0031">Aminopeptidase</keyword>
<keyword id="KW-0963">Cytoplasm</keyword>
<keyword id="KW-0378">Hydrolase</keyword>
<keyword id="KW-0479">Metal-binding</keyword>
<keyword id="KW-0645">Protease</keyword>
<keyword id="KW-1185">Reference proteome</keyword>
<organism>
    <name type="scientific">Yarrowia lipolytica (strain CLIB 122 / E 150)</name>
    <name type="common">Yeast</name>
    <name type="synonym">Candida lipolytica</name>
    <dbReference type="NCBI Taxonomy" id="284591"/>
    <lineage>
        <taxon>Eukaryota</taxon>
        <taxon>Fungi</taxon>
        <taxon>Dikarya</taxon>
        <taxon>Ascomycota</taxon>
        <taxon>Saccharomycotina</taxon>
        <taxon>Dipodascomycetes</taxon>
        <taxon>Dipodascales</taxon>
        <taxon>Dipodascales incertae sedis</taxon>
        <taxon>Yarrowia</taxon>
    </lineage>
</organism>
<reference key="1">
    <citation type="journal article" date="2004" name="Nature">
        <title>Genome evolution in yeasts.</title>
        <authorList>
            <person name="Dujon B."/>
            <person name="Sherman D."/>
            <person name="Fischer G."/>
            <person name="Durrens P."/>
            <person name="Casaregola S."/>
            <person name="Lafontaine I."/>
            <person name="de Montigny J."/>
            <person name="Marck C."/>
            <person name="Neuveglise C."/>
            <person name="Talla E."/>
            <person name="Goffard N."/>
            <person name="Frangeul L."/>
            <person name="Aigle M."/>
            <person name="Anthouard V."/>
            <person name="Babour A."/>
            <person name="Barbe V."/>
            <person name="Barnay S."/>
            <person name="Blanchin S."/>
            <person name="Beckerich J.-M."/>
            <person name="Beyne E."/>
            <person name="Bleykasten C."/>
            <person name="Boisrame A."/>
            <person name="Boyer J."/>
            <person name="Cattolico L."/>
            <person name="Confanioleri F."/>
            <person name="de Daruvar A."/>
            <person name="Despons L."/>
            <person name="Fabre E."/>
            <person name="Fairhead C."/>
            <person name="Ferry-Dumazet H."/>
            <person name="Groppi A."/>
            <person name="Hantraye F."/>
            <person name="Hennequin C."/>
            <person name="Jauniaux N."/>
            <person name="Joyet P."/>
            <person name="Kachouri R."/>
            <person name="Kerrest A."/>
            <person name="Koszul R."/>
            <person name="Lemaire M."/>
            <person name="Lesur I."/>
            <person name="Ma L."/>
            <person name="Muller H."/>
            <person name="Nicaud J.-M."/>
            <person name="Nikolski M."/>
            <person name="Oztas S."/>
            <person name="Ozier-Kalogeropoulos O."/>
            <person name="Pellenz S."/>
            <person name="Potier S."/>
            <person name="Richard G.-F."/>
            <person name="Straub M.-L."/>
            <person name="Suleau A."/>
            <person name="Swennen D."/>
            <person name="Tekaia F."/>
            <person name="Wesolowski-Louvel M."/>
            <person name="Westhof E."/>
            <person name="Wirth B."/>
            <person name="Zeniou-Meyer M."/>
            <person name="Zivanovic Y."/>
            <person name="Bolotin-Fukuhara M."/>
            <person name="Thierry A."/>
            <person name="Bouchier C."/>
            <person name="Caudron B."/>
            <person name="Scarpelli C."/>
            <person name="Gaillardin C."/>
            <person name="Weissenbach J."/>
            <person name="Wincker P."/>
            <person name="Souciet J.-L."/>
        </authorList>
    </citation>
    <scope>NUCLEOTIDE SEQUENCE [LARGE SCALE GENOMIC DNA]</scope>
    <source>
        <strain>CLIB 122 / E 150</strain>
    </source>
</reference>
<sequence>MAEAIEKVADKVADLVVDDKPAAVPESTSDHEDGDDNDDAVNEGEAVDGEKKKKKKKNKKKKKKGPAVQTEPPTVPIDRFFTSGIFPEGEICEHPHKTFKPKGTAVDPFADSEDEREAAEERAKDDAKHGSDDPLDFNRLRTTNEEKRYLDREQAAVHNEWRKGAEIHRVVRKYARDNIKAGMTMTSIAEMIEDSVRALSNEEDSLKGGQGFPTGVSLNHCAAHYTPNAGDKIVLKEDDVLKVDFGVHVNGKIIDSAFTHVQNDKWQGLLDAVKAATETGIREAGIDVRLGDIGEAIQETMESHEVEVDGKVYQVKSIRNLNGHNIAPYEIHGGKSVPIVKSADMTKMEEGETFAIETFGSTGRGYVVTDGECSHYAKNVGVGHVPLRVNKAKQLLATIDKNFGTLPFCRRYLDRLGEEKYLLALKNLVQSGVVQDYPPLVDQKGCQTAQYEHTIYLRPTCKEILSRGDDY</sequence>
<comment type="function">
    <text evidence="1">Cotranslationally removes the N-terminal methionine from nascent proteins. The N-terminal methionine is often cleaved when the second residue in the primary sequence is small and uncharged (Met-Ala-, Cys, Gly, Pro, Ser, Thr, or Val).</text>
</comment>
<comment type="catalytic activity">
    <reaction evidence="1">
        <text>Release of N-terminal amino acids, preferentially methionine, from peptides and arylamides.</text>
        <dbReference type="EC" id="3.4.11.18"/>
    </reaction>
</comment>
<comment type="cofactor">
    <cofactor evidence="1">
        <name>Co(2+)</name>
        <dbReference type="ChEBI" id="CHEBI:48828"/>
    </cofactor>
    <cofactor evidence="1">
        <name>Zn(2+)</name>
        <dbReference type="ChEBI" id="CHEBI:29105"/>
    </cofactor>
    <cofactor evidence="1">
        <name>Mn(2+)</name>
        <dbReference type="ChEBI" id="CHEBI:29035"/>
    </cofactor>
    <cofactor evidence="1">
        <name>Fe(2+)</name>
        <dbReference type="ChEBI" id="CHEBI:29033"/>
    </cofactor>
    <text evidence="1">Binds 2 divalent metal cations per subunit. Has a high-affinity and a low affinity metal-binding site. The true nature of the physiological cofactor is under debate. The enzyme is active with cobalt, zinc, manganese or divalent iron ions. Most likely, methionine aminopeptidases function as mononuclear Fe(2+)-metalloproteases under physiological conditions, and the catalytically relevant metal-binding site has been assigned to the histidine-containing high-affinity site.</text>
</comment>
<comment type="subcellular location">
    <subcellularLocation>
        <location evidence="1">Cytoplasm</location>
    </subcellularLocation>
</comment>
<comment type="similarity">
    <text evidence="1">Belongs to the peptidase M24A family. Methionine aminopeptidase eukaryotic type 2 subfamily.</text>
</comment>
<evidence type="ECO:0000255" key="1">
    <source>
        <dbReference type="HAMAP-Rule" id="MF_03175"/>
    </source>
</evidence>
<evidence type="ECO:0000256" key="2">
    <source>
        <dbReference type="SAM" id="MobiDB-lite"/>
    </source>
</evidence>
<proteinExistence type="inferred from homology"/>
<feature type="chain" id="PRO_0000407673" description="Methionine aminopeptidase 2">
    <location>
        <begin position="1"/>
        <end position="471"/>
    </location>
</feature>
<feature type="region of interest" description="Disordered" evidence="2">
    <location>
        <begin position="16"/>
        <end position="80"/>
    </location>
</feature>
<feature type="region of interest" description="Disordered" evidence="2">
    <location>
        <begin position="92"/>
        <end position="139"/>
    </location>
</feature>
<feature type="compositionally biased region" description="Acidic residues" evidence="2">
    <location>
        <begin position="32"/>
        <end position="47"/>
    </location>
</feature>
<feature type="compositionally biased region" description="Basic residues" evidence="2">
    <location>
        <begin position="52"/>
        <end position="65"/>
    </location>
</feature>
<feature type="compositionally biased region" description="Basic and acidic residues" evidence="2">
    <location>
        <begin position="119"/>
        <end position="139"/>
    </location>
</feature>
<feature type="binding site" evidence="1">
    <location>
        <position position="224"/>
    </location>
    <ligand>
        <name>substrate</name>
    </ligand>
</feature>
<feature type="binding site" evidence="1">
    <location>
        <position position="244"/>
    </location>
    <ligand>
        <name>a divalent metal cation</name>
        <dbReference type="ChEBI" id="CHEBI:60240"/>
        <label>1</label>
    </ligand>
</feature>
<feature type="binding site" evidence="1">
    <location>
        <position position="255"/>
    </location>
    <ligand>
        <name>a divalent metal cation</name>
        <dbReference type="ChEBI" id="CHEBI:60240"/>
        <label>1</label>
    </ligand>
</feature>
<feature type="binding site" evidence="1">
    <location>
        <position position="255"/>
    </location>
    <ligand>
        <name>a divalent metal cation</name>
        <dbReference type="ChEBI" id="CHEBI:60240"/>
        <label>2</label>
        <note>catalytic</note>
    </ligand>
</feature>
<feature type="binding site" evidence="1">
    <location>
        <position position="324"/>
    </location>
    <ligand>
        <name>a divalent metal cation</name>
        <dbReference type="ChEBI" id="CHEBI:60240"/>
        <label>2</label>
        <note>catalytic</note>
    </ligand>
</feature>
<feature type="binding site" evidence="1">
    <location>
        <position position="332"/>
    </location>
    <ligand>
        <name>substrate</name>
    </ligand>
</feature>
<feature type="binding site" evidence="1">
    <location>
        <position position="357"/>
    </location>
    <ligand>
        <name>a divalent metal cation</name>
        <dbReference type="ChEBI" id="CHEBI:60240"/>
        <label>2</label>
        <note>catalytic</note>
    </ligand>
</feature>
<feature type="binding site" evidence="1">
    <location>
        <position position="452"/>
    </location>
    <ligand>
        <name>a divalent metal cation</name>
        <dbReference type="ChEBI" id="CHEBI:60240"/>
        <label>1</label>
    </ligand>
</feature>
<feature type="binding site" evidence="1">
    <location>
        <position position="452"/>
    </location>
    <ligand>
        <name>a divalent metal cation</name>
        <dbReference type="ChEBI" id="CHEBI:60240"/>
        <label>2</label>
        <note>catalytic</note>
    </ligand>
</feature>
<name>MAP2_YARLI</name>
<gene>
    <name evidence="1" type="primary">MAP2</name>
    <name type="ordered locus">YALI0D05159g</name>
</gene>